<organism>
    <name type="scientific">Helianthus annuus</name>
    <name type="common">Common sunflower</name>
    <dbReference type="NCBI Taxonomy" id="4232"/>
    <lineage>
        <taxon>Eukaryota</taxon>
        <taxon>Viridiplantae</taxon>
        <taxon>Streptophyta</taxon>
        <taxon>Embryophyta</taxon>
        <taxon>Tracheophyta</taxon>
        <taxon>Spermatophyta</taxon>
        <taxon>Magnoliopsida</taxon>
        <taxon>eudicotyledons</taxon>
        <taxon>Gunneridae</taxon>
        <taxon>Pentapetalae</taxon>
        <taxon>asterids</taxon>
        <taxon>campanulids</taxon>
        <taxon>Asterales</taxon>
        <taxon>Asteraceae</taxon>
        <taxon>Asteroideae</taxon>
        <taxon>Heliantheae alliance</taxon>
        <taxon>Heliantheae</taxon>
        <taxon>Helianthus</taxon>
    </lineage>
</organism>
<dbReference type="EMBL" id="DQ383815">
    <property type="protein sequence ID" value="ABD47161.1"/>
    <property type="molecule type" value="Genomic_DNA"/>
</dbReference>
<dbReference type="RefSeq" id="YP_588132.1">
    <property type="nucleotide sequence ID" value="NC_007977.1"/>
</dbReference>
<dbReference type="SMR" id="Q1KXU4"/>
<dbReference type="GeneID" id="4055669"/>
<dbReference type="KEGG" id="han:4055669"/>
<dbReference type="OrthoDB" id="99at2759"/>
<dbReference type="GO" id="GO:0009535">
    <property type="term" value="C:chloroplast thylakoid membrane"/>
    <property type="evidence" value="ECO:0007669"/>
    <property type="project" value="UniProtKB-SubCell"/>
</dbReference>
<dbReference type="GO" id="GO:0009539">
    <property type="term" value="C:photosystem II reaction center"/>
    <property type="evidence" value="ECO:0007669"/>
    <property type="project" value="InterPro"/>
</dbReference>
<dbReference type="GO" id="GO:0015979">
    <property type="term" value="P:photosynthesis"/>
    <property type="evidence" value="ECO:0007669"/>
    <property type="project" value="UniProtKB-UniRule"/>
</dbReference>
<dbReference type="HAMAP" id="MF_01317">
    <property type="entry name" value="PSII_PsbL"/>
    <property type="match status" value="1"/>
</dbReference>
<dbReference type="InterPro" id="IPR003372">
    <property type="entry name" value="PSII_PsbL"/>
</dbReference>
<dbReference type="InterPro" id="IPR037266">
    <property type="entry name" value="PSII_PsbL_sf"/>
</dbReference>
<dbReference type="NCBIfam" id="NF001972">
    <property type="entry name" value="PRK00753.1"/>
    <property type="match status" value="1"/>
</dbReference>
<dbReference type="Pfam" id="PF02419">
    <property type="entry name" value="PsbL"/>
    <property type="match status" value="1"/>
</dbReference>
<dbReference type="SUPFAM" id="SSF161017">
    <property type="entry name" value="Photosystem II reaction center protein L, PsbL"/>
    <property type="match status" value="1"/>
</dbReference>
<evidence type="ECO:0000255" key="1">
    <source>
        <dbReference type="HAMAP-Rule" id="MF_01317"/>
    </source>
</evidence>
<geneLocation type="chloroplast"/>
<sequence length="38" mass="4497">MTQSNPNEQNVELNRTSLYWGLLLIFVLAVLFSNYFFN</sequence>
<comment type="function">
    <text evidence="1">One of the components of the core complex of photosystem II (PSII). PSII is a light-driven water:plastoquinone oxidoreductase that uses light energy to abstract electrons from H(2)O, generating O(2) and a proton gradient subsequently used for ATP formation. It consists of a core antenna complex that captures photons, and an electron transfer chain that converts photonic excitation into a charge separation. This subunit is found at the monomer-monomer interface and is required for correct PSII assembly and/or dimerization.</text>
</comment>
<comment type="subunit">
    <text evidence="1">PSII is composed of 1 copy each of membrane proteins PsbA, PsbB, PsbC, PsbD, PsbE, PsbF, PsbH, PsbI, PsbJ, PsbK, PsbL, PsbM, PsbT, PsbX, PsbY, PsbZ, Psb30/Ycf12, at least 3 peripheral proteins of the oxygen-evolving complex and a large number of cofactors. It forms dimeric complexes.</text>
</comment>
<comment type="subcellular location">
    <subcellularLocation>
        <location evidence="1">Plastid</location>
        <location evidence="1">Chloroplast thylakoid membrane</location>
        <topology evidence="1">Single-pass membrane protein</topology>
    </subcellularLocation>
</comment>
<comment type="similarity">
    <text evidence="1">Belongs to the PsbL family.</text>
</comment>
<proteinExistence type="inferred from homology"/>
<reference key="1">
    <citation type="submission" date="2006-01" db="EMBL/GenBank/DDBJ databases">
        <title>A comparison of the first two published chloroplast genomes in Asteraceae: Lactuca and Helianthus.</title>
        <authorList>
            <person name="Timme R.E."/>
            <person name="Kuehl J.V."/>
            <person name="Boore J.L."/>
            <person name="Jansen R.K."/>
        </authorList>
    </citation>
    <scope>NUCLEOTIDE SEQUENCE [LARGE SCALE GENOMIC DNA]</scope>
    <source>
        <strain>cv. HA383</strain>
    </source>
</reference>
<accession>Q1KXU4</accession>
<gene>
    <name evidence="1" type="primary">psbL</name>
</gene>
<feature type="chain" id="PRO_0000276210" description="Photosystem II reaction center protein L">
    <location>
        <begin position="1"/>
        <end position="38"/>
    </location>
</feature>
<feature type="transmembrane region" description="Helical" evidence="1">
    <location>
        <begin position="17"/>
        <end position="37"/>
    </location>
</feature>
<name>PSBL_HELAN</name>
<keyword id="KW-0150">Chloroplast</keyword>
<keyword id="KW-0472">Membrane</keyword>
<keyword id="KW-0602">Photosynthesis</keyword>
<keyword id="KW-0604">Photosystem II</keyword>
<keyword id="KW-0934">Plastid</keyword>
<keyword id="KW-0674">Reaction center</keyword>
<keyword id="KW-0793">Thylakoid</keyword>
<keyword id="KW-0812">Transmembrane</keyword>
<keyword id="KW-1133">Transmembrane helix</keyword>
<protein>
    <recommendedName>
        <fullName evidence="1">Photosystem II reaction center protein L</fullName>
        <shortName evidence="1">PSII-L</shortName>
    </recommendedName>
</protein>